<name>DICT_DICLA</name>
<sequence length="79" mass="9152">MKCATLFLVLSMVVLMAEPGDAFFHHIFRGIVHVGKSIHKLVTGGKAQQDQQDQQYQQDQQDQQAEQYQRFNRERAAFD</sequence>
<feature type="signal peptide" evidence="2">
    <location>
        <begin position="1"/>
        <end position="22"/>
    </location>
</feature>
<feature type="peptide" id="PRO_0000000281" description="Dicentracin">
    <location>
        <begin position="23"/>
        <end position="44"/>
    </location>
</feature>
<feature type="propeptide" id="PRO_0000000282" evidence="1">
    <location>
        <begin position="47"/>
        <end position="79"/>
    </location>
</feature>
<feature type="region of interest" description="Disordered" evidence="3">
    <location>
        <begin position="48"/>
        <end position="67"/>
    </location>
</feature>
<feature type="modified residue" description="Glycine amide" evidence="1">
    <location>
        <position position="44"/>
    </location>
</feature>
<evidence type="ECO:0000250" key="1"/>
<evidence type="ECO:0000255" key="2"/>
<evidence type="ECO:0000256" key="3">
    <source>
        <dbReference type="SAM" id="MobiDB-lite"/>
    </source>
</evidence>
<evidence type="ECO:0000305" key="4"/>
<reference key="1">
    <citation type="submission" date="2003-05" db="EMBL/GenBank/DDBJ databases">
        <title>Dicentracine, first antimicrobial peptide isolated from the fish Dicentrarchus labrax.</title>
        <authorList>
            <person name="Salerno G."/>
            <person name="Roch P."/>
            <person name="Sri Widada J."/>
        </authorList>
    </citation>
    <scope>NUCLEOTIDE SEQUENCE [MRNA]</scope>
</reference>
<comment type="subcellular location">
    <subcellularLocation>
        <location evidence="4">Secreted</location>
    </subcellularLocation>
</comment>
<comment type="similarity">
    <text evidence="4">Belongs to the pleurocidin family.</text>
</comment>
<accession>P59906</accession>
<protein>
    <recommendedName>
        <fullName>Dicentracin</fullName>
    </recommendedName>
    <alternativeName>
        <fullName>Dicentracine</fullName>
    </alternativeName>
</protein>
<dbReference type="EMBL" id="AY303949">
    <property type="protein sequence ID" value="AAP58960.1"/>
    <property type="molecule type" value="mRNA"/>
</dbReference>
<dbReference type="SMR" id="P59906"/>
<dbReference type="Proteomes" id="UP000694389">
    <property type="component" value="Unplaced"/>
</dbReference>
<dbReference type="GO" id="GO:0005576">
    <property type="term" value="C:extracellular region"/>
    <property type="evidence" value="ECO:0007669"/>
    <property type="project" value="UniProtKB-SubCell"/>
</dbReference>
<dbReference type="GO" id="GO:0042742">
    <property type="term" value="P:defense response to bacterium"/>
    <property type="evidence" value="ECO:0007669"/>
    <property type="project" value="UniProtKB-KW"/>
</dbReference>
<dbReference type="InterPro" id="IPR012515">
    <property type="entry name" value="Antimicrobial12"/>
</dbReference>
<dbReference type="Pfam" id="PF08107">
    <property type="entry name" value="Antimicrobial12"/>
    <property type="match status" value="1"/>
</dbReference>
<keyword id="KW-0027">Amidation</keyword>
<keyword id="KW-0044">Antibiotic</keyword>
<keyword id="KW-0929">Antimicrobial</keyword>
<keyword id="KW-1185">Reference proteome</keyword>
<keyword id="KW-0964">Secreted</keyword>
<keyword id="KW-0732">Signal</keyword>
<organism>
    <name type="scientific">Dicentrarchus labrax</name>
    <name type="common">European seabass</name>
    <name type="synonym">Morone labrax</name>
    <dbReference type="NCBI Taxonomy" id="13489"/>
    <lineage>
        <taxon>Eukaryota</taxon>
        <taxon>Metazoa</taxon>
        <taxon>Chordata</taxon>
        <taxon>Craniata</taxon>
        <taxon>Vertebrata</taxon>
        <taxon>Euteleostomi</taxon>
        <taxon>Actinopterygii</taxon>
        <taxon>Neopterygii</taxon>
        <taxon>Teleostei</taxon>
        <taxon>Neoteleostei</taxon>
        <taxon>Acanthomorphata</taxon>
        <taxon>Eupercaria</taxon>
        <taxon>Moronidae</taxon>
        <taxon>Dicentrarchus</taxon>
    </lineage>
</organism>
<proteinExistence type="inferred from homology"/>